<reference key="1">
    <citation type="journal article" date="2001" name="DNA Res.">
        <title>Complete genome sequence of an aerobic thermoacidophilic Crenarchaeon, Sulfolobus tokodaii strain7.</title>
        <authorList>
            <person name="Kawarabayasi Y."/>
            <person name="Hino Y."/>
            <person name="Horikawa H."/>
            <person name="Jin-no K."/>
            <person name="Takahashi M."/>
            <person name="Sekine M."/>
            <person name="Baba S."/>
            <person name="Ankai A."/>
            <person name="Kosugi H."/>
            <person name="Hosoyama A."/>
            <person name="Fukui S."/>
            <person name="Nagai Y."/>
            <person name="Nishijima K."/>
            <person name="Otsuka R."/>
            <person name="Nakazawa H."/>
            <person name="Takamiya M."/>
            <person name="Kato Y."/>
            <person name="Yoshizawa T."/>
            <person name="Tanaka T."/>
            <person name="Kudoh Y."/>
            <person name="Yamazaki J."/>
            <person name="Kushida N."/>
            <person name="Oguchi A."/>
            <person name="Aoki K."/>
            <person name="Masuda S."/>
            <person name="Yanagii M."/>
            <person name="Nishimura M."/>
            <person name="Yamagishi A."/>
            <person name="Oshima T."/>
            <person name="Kikuchi H."/>
        </authorList>
    </citation>
    <scope>NUCLEOTIDE SEQUENCE [LARGE SCALE GENOMIC DNA]</scope>
    <source>
        <strain>DSM 16993 / JCM 10545 / NBRC 100140 / 7</strain>
    </source>
</reference>
<feature type="chain" id="PRO_0000131166" description="Large ribosomal subunit protein eL32">
    <location>
        <begin position="1"/>
        <end position="131"/>
    </location>
</feature>
<sequence>MNKQINIRKIQEKIKKIREKKIKFLRYDWDKFYRIGRQETWRKPKGIDNPVRLELKGYQPKVKIGFRSPREIRGLHPSGLIPFYVNNKKDLEKASQMKDKVIVVFSSTIGLKKKLELVEEAKKMGLKIANG</sequence>
<protein>
    <recommendedName>
        <fullName evidence="1">Large ribosomal subunit protein eL32</fullName>
    </recommendedName>
    <alternativeName>
        <fullName>50S ribosomal protein L32e</fullName>
    </alternativeName>
</protein>
<gene>
    <name type="primary">rpl32e</name>
    <name type="ordered locus">STK_04170</name>
</gene>
<dbReference type="EMBL" id="BA000023">
    <property type="protein sequence ID" value="BAB65403.1"/>
    <property type="molecule type" value="Genomic_DNA"/>
</dbReference>
<dbReference type="RefSeq" id="WP_010978386.1">
    <property type="nucleotide sequence ID" value="NC_003106.2"/>
</dbReference>
<dbReference type="SMR" id="Q975J7"/>
<dbReference type="STRING" id="273063.STK_04170"/>
<dbReference type="GeneID" id="1458350"/>
<dbReference type="KEGG" id="sto:STK_04170"/>
<dbReference type="PATRIC" id="fig|273063.9.peg.483"/>
<dbReference type="eggNOG" id="arCOG00781">
    <property type="taxonomic scope" value="Archaea"/>
</dbReference>
<dbReference type="OrthoDB" id="372100at2157"/>
<dbReference type="Proteomes" id="UP000001015">
    <property type="component" value="Chromosome"/>
</dbReference>
<dbReference type="GO" id="GO:0022625">
    <property type="term" value="C:cytosolic large ribosomal subunit"/>
    <property type="evidence" value="ECO:0007669"/>
    <property type="project" value="TreeGrafter"/>
</dbReference>
<dbReference type="GO" id="GO:0003735">
    <property type="term" value="F:structural constituent of ribosome"/>
    <property type="evidence" value="ECO:0007669"/>
    <property type="project" value="InterPro"/>
</dbReference>
<dbReference type="GO" id="GO:0006412">
    <property type="term" value="P:translation"/>
    <property type="evidence" value="ECO:0007669"/>
    <property type="project" value="UniProtKB-UniRule"/>
</dbReference>
<dbReference type="CDD" id="cd00513">
    <property type="entry name" value="Ribosomal_L32_L32e"/>
    <property type="match status" value="1"/>
</dbReference>
<dbReference type="HAMAP" id="MF_00810">
    <property type="entry name" value="Ribosomal_eL32"/>
    <property type="match status" value="1"/>
</dbReference>
<dbReference type="InterPro" id="IPR001515">
    <property type="entry name" value="Ribosomal_eL32"/>
</dbReference>
<dbReference type="InterPro" id="IPR023654">
    <property type="entry name" value="Ribosomal_eL32_arc"/>
</dbReference>
<dbReference type="InterPro" id="IPR018263">
    <property type="entry name" value="Ribosomal_eL32_CS"/>
</dbReference>
<dbReference type="InterPro" id="IPR036351">
    <property type="entry name" value="Ribosomal_eL32_sf"/>
</dbReference>
<dbReference type="NCBIfam" id="NF006332">
    <property type="entry name" value="PRK08562.1"/>
    <property type="match status" value="1"/>
</dbReference>
<dbReference type="PANTHER" id="PTHR23413">
    <property type="entry name" value="60S RIBOSOMAL PROTEIN L32 AND DNA-DIRECTED RNA POLYMERASE II, SUBUNIT N"/>
    <property type="match status" value="1"/>
</dbReference>
<dbReference type="PANTHER" id="PTHR23413:SF1">
    <property type="entry name" value="RIBOSOMAL PROTEIN L32"/>
    <property type="match status" value="1"/>
</dbReference>
<dbReference type="Pfam" id="PF01655">
    <property type="entry name" value="Ribosomal_L32e"/>
    <property type="match status" value="1"/>
</dbReference>
<dbReference type="SMART" id="SM01393">
    <property type="entry name" value="Ribosomal_L32e"/>
    <property type="match status" value="1"/>
</dbReference>
<dbReference type="SUPFAM" id="SSF52042">
    <property type="entry name" value="Ribosomal protein L32e"/>
    <property type="match status" value="1"/>
</dbReference>
<dbReference type="PROSITE" id="PS00580">
    <property type="entry name" value="RIBOSOMAL_L32E"/>
    <property type="match status" value="1"/>
</dbReference>
<name>RL32_SULTO</name>
<proteinExistence type="inferred from homology"/>
<organism>
    <name type="scientific">Sulfurisphaera tokodaii (strain DSM 16993 / JCM 10545 / NBRC 100140 / 7)</name>
    <name type="common">Sulfolobus tokodaii</name>
    <dbReference type="NCBI Taxonomy" id="273063"/>
    <lineage>
        <taxon>Archaea</taxon>
        <taxon>Thermoproteota</taxon>
        <taxon>Thermoprotei</taxon>
        <taxon>Sulfolobales</taxon>
        <taxon>Sulfolobaceae</taxon>
        <taxon>Sulfurisphaera</taxon>
    </lineage>
</organism>
<keyword id="KW-1185">Reference proteome</keyword>
<keyword id="KW-0687">Ribonucleoprotein</keyword>
<keyword id="KW-0689">Ribosomal protein</keyword>
<comment type="similarity">
    <text evidence="1">Belongs to the eukaryotic ribosomal protein eL32 family.</text>
</comment>
<evidence type="ECO:0000305" key="1"/>
<accession>Q975J7</accession>